<reference key="1">
    <citation type="journal article" date="2010" name="Genome Biol. Evol.">
        <title>Continuing evolution of Burkholderia mallei through genome reduction and large-scale rearrangements.</title>
        <authorList>
            <person name="Losada L."/>
            <person name="Ronning C.M."/>
            <person name="DeShazer D."/>
            <person name="Woods D."/>
            <person name="Fedorova N."/>
            <person name="Kim H.S."/>
            <person name="Shabalina S.A."/>
            <person name="Pearson T.R."/>
            <person name="Brinkac L."/>
            <person name="Tan P."/>
            <person name="Nandi T."/>
            <person name="Crabtree J."/>
            <person name="Badger J."/>
            <person name="Beckstrom-Sternberg S."/>
            <person name="Saqib M."/>
            <person name="Schutzer S.E."/>
            <person name="Keim P."/>
            <person name="Nierman W.C."/>
        </authorList>
    </citation>
    <scope>NUCLEOTIDE SEQUENCE [LARGE SCALE GENOMIC DNA]</scope>
    <source>
        <strain>1106a</strain>
    </source>
</reference>
<name>NUOC_BURP0</name>
<keyword id="KW-0997">Cell inner membrane</keyword>
<keyword id="KW-1003">Cell membrane</keyword>
<keyword id="KW-0472">Membrane</keyword>
<keyword id="KW-0520">NAD</keyword>
<keyword id="KW-0874">Quinone</keyword>
<keyword id="KW-1278">Translocase</keyword>
<keyword id="KW-0813">Transport</keyword>
<keyword id="KW-0830">Ubiquinone</keyword>
<evidence type="ECO:0000255" key="1">
    <source>
        <dbReference type="HAMAP-Rule" id="MF_01357"/>
    </source>
</evidence>
<sequence>MASKIETLKANLEAALGARAVSLVEAVGELTLVVKASDYLEVAKQLRDDRSLGFEQLIDLCGVDYQTYGDGAYDGPRFAAVLHLLSVANNWRLRVRVFASDDDLPIVPSVVDIWNSANWYEREAFDLYGIVFEGHPDLRRILTDYGFIGHPFRKDFPVSGYVEMRYDPQEKRVVYQPVTIEPREITPRVIREDRYGGLKH</sequence>
<gene>
    <name evidence="1" type="primary">nuoC</name>
    <name type="ordered locus">BURPS1106A_1301</name>
</gene>
<proteinExistence type="inferred from homology"/>
<comment type="function">
    <text evidence="1">NDH-1 shuttles electrons from NADH, via FMN and iron-sulfur (Fe-S) centers, to quinones in the respiratory chain. The immediate electron acceptor for the enzyme in this species is believed to be ubiquinone. Couples the redox reaction to proton translocation (for every two electrons transferred, four hydrogen ions are translocated across the cytoplasmic membrane), and thus conserves the redox energy in a proton gradient.</text>
</comment>
<comment type="catalytic activity">
    <reaction evidence="1">
        <text>a quinone + NADH + 5 H(+)(in) = a quinol + NAD(+) + 4 H(+)(out)</text>
        <dbReference type="Rhea" id="RHEA:57888"/>
        <dbReference type="ChEBI" id="CHEBI:15378"/>
        <dbReference type="ChEBI" id="CHEBI:24646"/>
        <dbReference type="ChEBI" id="CHEBI:57540"/>
        <dbReference type="ChEBI" id="CHEBI:57945"/>
        <dbReference type="ChEBI" id="CHEBI:132124"/>
    </reaction>
</comment>
<comment type="subunit">
    <text evidence="1">NDH-1 is composed of 14 different subunits. Subunits NuoB, C, D, E, F, and G constitute the peripheral sector of the complex.</text>
</comment>
<comment type="subcellular location">
    <subcellularLocation>
        <location evidence="1">Cell inner membrane</location>
        <topology evidence="1">Peripheral membrane protein</topology>
        <orientation evidence="1">Cytoplasmic side</orientation>
    </subcellularLocation>
</comment>
<comment type="similarity">
    <text evidence="1">Belongs to the complex I 30 kDa subunit family.</text>
</comment>
<organism>
    <name type="scientific">Burkholderia pseudomallei (strain 1106a)</name>
    <dbReference type="NCBI Taxonomy" id="357348"/>
    <lineage>
        <taxon>Bacteria</taxon>
        <taxon>Pseudomonadati</taxon>
        <taxon>Pseudomonadota</taxon>
        <taxon>Betaproteobacteria</taxon>
        <taxon>Burkholderiales</taxon>
        <taxon>Burkholderiaceae</taxon>
        <taxon>Burkholderia</taxon>
        <taxon>pseudomallei group</taxon>
    </lineage>
</organism>
<dbReference type="EC" id="7.1.1.-" evidence="1"/>
<dbReference type="EMBL" id="CP000572">
    <property type="protein sequence ID" value="ABN91590.1"/>
    <property type="molecule type" value="Genomic_DNA"/>
</dbReference>
<dbReference type="RefSeq" id="WP_004186121.1">
    <property type="nucleotide sequence ID" value="NC_009076.1"/>
</dbReference>
<dbReference type="SMR" id="A3NTA8"/>
<dbReference type="KEGG" id="bpl:BURPS1106A_1301"/>
<dbReference type="HOGENOM" id="CLU_042628_2_1_4"/>
<dbReference type="Proteomes" id="UP000006738">
    <property type="component" value="Chromosome I"/>
</dbReference>
<dbReference type="GO" id="GO:0005886">
    <property type="term" value="C:plasma membrane"/>
    <property type="evidence" value="ECO:0007669"/>
    <property type="project" value="UniProtKB-SubCell"/>
</dbReference>
<dbReference type="GO" id="GO:0008137">
    <property type="term" value="F:NADH dehydrogenase (ubiquinone) activity"/>
    <property type="evidence" value="ECO:0007669"/>
    <property type="project" value="InterPro"/>
</dbReference>
<dbReference type="GO" id="GO:0050136">
    <property type="term" value="F:NADH:ubiquinone reductase (non-electrogenic) activity"/>
    <property type="evidence" value="ECO:0007669"/>
    <property type="project" value="UniProtKB-UniRule"/>
</dbReference>
<dbReference type="GO" id="GO:0048038">
    <property type="term" value="F:quinone binding"/>
    <property type="evidence" value="ECO:0007669"/>
    <property type="project" value="UniProtKB-KW"/>
</dbReference>
<dbReference type="Gene3D" id="3.30.460.80">
    <property type="entry name" value="NADH:ubiquinone oxidoreductase, 30kDa subunit"/>
    <property type="match status" value="1"/>
</dbReference>
<dbReference type="HAMAP" id="MF_01357">
    <property type="entry name" value="NDH1_NuoC"/>
    <property type="match status" value="1"/>
</dbReference>
<dbReference type="InterPro" id="IPR010218">
    <property type="entry name" value="NADH_DH_suC"/>
</dbReference>
<dbReference type="InterPro" id="IPR037232">
    <property type="entry name" value="NADH_quin_OxRdtase_su_C/D-like"/>
</dbReference>
<dbReference type="InterPro" id="IPR001268">
    <property type="entry name" value="NADH_UbQ_OxRdtase_30kDa_su"/>
</dbReference>
<dbReference type="InterPro" id="IPR020396">
    <property type="entry name" value="NADH_UbQ_OxRdtase_CS"/>
</dbReference>
<dbReference type="NCBIfam" id="TIGR01961">
    <property type="entry name" value="NuoC_fam"/>
    <property type="match status" value="1"/>
</dbReference>
<dbReference type="NCBIfam" id="NF004730">
    <property type="entry name" value="PRK06074.1-1"/>
    <property type="match status" value="1"/>
</dbReference>
<dbReference type="PANTHER" id="PTHR10884:SF14">
    <property type="entry name" value="NADH DEHYDROGENASE [UBIQUINONE] IRON-SULFUR PROTEIN 3, MITOCHONDRIAL"/>
    <property type="match status" value="1"/>
</dbReference>
<dbReference type="PANTHER" id="PTHR10884">
    <property type="entry name" value="NADH DEHYDROGENASE UBIQUINONE IRON-SULFUR PROTEIN 3"/>
    <property type="match status" value="1"/>
</dbReference>
<dbReference type="Pfam" id="PF00329">
    <property type="entry name" value="Complex1_30kDa"/>
    <property type="match status" value="1"/>
</dbReference>
<dbReference type="SUPFAM" id="SSF143243">
    <property type="entry name" value="Nqo5-like"/>
    <property type="match status" value="1"/>
</dbReference>
<dbReference type="PROSITE" id="PS00542">
    <property type="entry name" value="COMPLEX1_30K"/>
    <property type="match status" value="1"/>
</dbReference>
<feature type="chain" id="PRO_0000358072" description="NADH-quinone oxidoreductase subunit C">
    <location>
        <begin position="1"/>
        <end position="200"/>
    </location>
</feature>
<accession>A3NTA8</accession>
<protein>
    <recommendedName>
        <fullName evidence="1">NADH-quinone oxidoreductase subunit C</fullName>
        <ecNumber evidence="1">7.1.1.-</ecNumber>
    </recommendedName>
    <alternativeName>
        <fullName evidence="1">NADH dehydrogenase I subunit C</fullName>
    </alternativeName>
    <alternativeName>
        <fullName evidence="1">NDH-1 subunit C</fullName>
    </alternativeName>
</protein>